<comment type="subunit">
    <text evidence="1">Part of the 50S ribosomal subunit.</text>
</comment>
<comment type="similarity">
    <text evidence="2">Belongs to the universal ribosomal protein uL30 family.</text>
</comment>
<sequence>AEKKTVTVKQTGSPIXXXK</sequence>
<proteinExistence type="evidence at protein level"/>
<evidence type="ECO:0000250" key="1"/>
<evidence type="ECO:0000305" key="2"/>
<name>RL30_BREVE</name>
<gene>
    <name type="primary">rpmD</name>
</gene>
<dbReference type="GO" id="GO:1990904">
    <property type="term" value="C:ribonucleoprotein complex"/>
    <property type="evidence" value="ECO:0007669"/>
    <property type="project" value="UniProtKB-KW"/>
</dbReference>
<dbReference type="GO" id="GO:0005840">
    <property type="term" value="C:ribosome"/>
    <property type="evidence" value="ECO:0007669"/>
    <property type="project" value="UniProtKB-KW"/>
</dbReference>
<keyword id="KW-0903">Direct protein sequencing</keyword>
<keyword id="KW-0687">Ribonucleoprotein</keyword>
<keyword id="KW-0689">Ribosomal protein</keyword>
<reference key="1">
    <citation type="journal article" date="1995" name="Int. J. Syst. Bacteriol.">
        <title>Comparative ribosomal protein sequence analyses of a phylogenetically defined genus, Pseudomonas, and its relatives.</title>
        <authorList>
            <person name="Ochi K."/>
        </authorList>
    </citation>
    <scope>PROTEIN SEQUENCE</scope>
    <source>
        <strain>ATCC 11426 / DSM 7226 / JCM 1477 / LMG 2350 / NBRC 12165 / NCIMB 1945 / NCTC 10900</strain>
    </source>
</reference>
<accession>Q9R4P3</accession>
<feature type="chain" id="PRO_0000224004" description="Large ribosomal subunit protein uL30">
    <location>
        <begin position="1"/>
        <end position="19" status="greater than"/>
    </location>
</feature>
<feature type="non-terminal residue">
    <location>
        <position position="19"/>
    </location>
</feature>
<organism>
    <name type="scientific">Brevundimonas vesicularis</name>
    <name type="common">Pseudomonas vesicularis</name>
    <dbReference type="NCBI Taxonomy" id="41276"/>
    <lineage>
        <taxon>Bacteria</taxon>
        <taxon>Pseudomonadati</taxon>
        <taxon>Pseudomonadota</taxon>
        <taxon>Alphaproteobacteria</taxon>
        <taxon>Caulobacterales</taxon>
        <taxon>Caulobacteraceae</taxon>
        <taxon>Brevundimonas</taxon>
    </lineage>
</organism>
<protein>
    <recommendedName>
        <fullName evidence="2">Large ribosomal subunit protein uL30</fullName>
    </recommendedName>
    <alternativeName>
        <fullName>50S ribosomal protein L30</fullName>
    </alternativeName>
</protein>